<dbReference type="EMBL" id="DQ347959">
    <property type="protein sequence ID" value="ABC56340.1"/>
    <property type="molecule type" value="Genomic_DNA"/>
</dbReference>
<dbReference type="EMBL" id="AM087200">
    <property type="protein sequence ID" value="CAJ32434.1"/>
    <property type="molecule type" value="Genomic_DNA"/>
</dbReference>
<dbReference type="RefSeq" id="AP_004968.1">
    <property type="nucleotide sequence ID" value="AC_000188.1"/>
</dbReference>
<dbReference type="RefSeq" id="YP_008563129.1">
    <property type="nucleotide sequence ID" value="NC_007898.3"/>
</dbReference>
<dbReference type="SMR" id="Q2MI60"/>
<dbReference type="FunCoup" id="Q2MI60">
    <property type="interactions" value="74"/>
</dbReference>
<dbReference type="STRING" id="4081.Q2MI60"/>
<dbReference type="PaxDb" id="4081-Solyc01g007620.2.1"/>
<dbReference type="GeneID" id="3950383"/>
<dbReference type="KEGG" id="sly:3950383"/>
<dbReference type="eggNOG" id="KOG0899">
    <property type="taxonomic scope" value="Eukaryota"/>
</dbReference>
<dbReference type="InParanoid" id="Q2MI60"/>
<dbReference type="OrthoDB" id="2043at2759"/>
<dbReference type="Proteomes" id="UP000004994">
    <property type="component" value="Chloroplast"/>
</dbReference>
<dbReference type="GO" id="GO:0009507">
    <property type="term" value="C:chloroplast"/>
    <property type="evidence" value="ECO:0007669"/>
    <property type="project" value="UniProtKB-SubCell"/>
</dbReference>
<dbReference type="GO" id="GO:0005763">
    <property type="term" value="C:mitochondrial small ribosomal subunit"/>
    <property type="evidence" value="ECO:0000318"/>
    <property type="project" value="GO_Central"/>
</dbReference>
<dbReference type="GO" id="GO:0019843">
    <property type="term" value="F:rRNA binding"/>
    <property type="evidence" value="ECO:0007669"/>
    <property type="project" value="UniProtKB-UniRule"/>
</dbReference>
<dbReference type="GO" id="GO:0003735">
    <property type="term" value="F:structural constituent of ribosome"/>
    <property type="evidence" value="ECO:0000318"/>
    <property type="project" value="GO_Central"/>
</dbReference>
<dbReference type="GO" id="GO:0000028">
    <property type="term" value="P:ribosomal small subunit assembly"/>
    <property type="evidence" value="ECO:0000318"/>
    <property type="project" value="GO_Central"/>
</dbReference>
<dbReference type="GO" id="GO:0006412">
    <property type="term" value="P:translation"/>
    <property type="evidence" value="ECO:0007669"/>
    <property type="project" value="UniProtKB-UniRule"/>
</dbReference>
<dbReference type="FunFam" id="3.30.860.10:FF:000001">
    <property type="entry name" value="30S ribosomal protein S19"/>
    <property type="match status" value="1"/>
</dbReference>
<dbReference type="Gene3D" id="3.30.860.10">
    <property type="entry name" value="30s Ribosomal Protein S19, Chain A"/>
    <property type="match status" value="1"/>
</dbReference>
<dbReference type="HAMAP" id="MF_00531">
    <property type="entry name" value="Ribosomal_uS19"/>
    <property type="match status" value="1"/>
</dbReference>
<dbReference type="InterPro" id="IPR002222">
    <property type="entry name" value="Ribosomal_uS19"/>
</dbReference>
<dbReference type="InterPro" id="IPR005732">
    <property type="entry name" value="Ribosomal_uS19_bac-type"/>
</dbReference>
<dbReference type="InterPro" id="IPR020934">
    <property type="entry name" value="Ribosomal_uS19_CS"/>
</dbReference>
<dbReference type="InterPro" id="IPR023575">
    <property type="entry name" value="Ribosomal_uS19_SF"/>
</dbReference>
<dbReference type="NCBIfam" id="TIGR01050">
    <property type="entry name" value="rpsS_bact"/>
    <property type="match status" value="1"/>
</dbReference>
<dbReference type="PANTHER" id="PTHR11880">
    <property type="entry name" value="RIBOSOMAL PROTEIN S19P FAMILY MEMBER"/>
    <property type="match status" value="1"/>
</dbReference>
<dbReference type="PANTHER" id="PTHR11880:SF8">
    <property type="entry name" value="SMALL RIBOSOMAL SUBUNIT PROTEIN US19M"/>
    <property type="match status" value="1"/>
</dbReference>
<dbReference type="Pfam" id="PF00203">
    <property type="entry name" value="Ribosomal_S19"/>
    <property type="match status" value="1"/>
</dbReference>
<dbReference type="PIRSF" id="PIRSF002144">
    <property type="entry name" value="Ribosomal_S19"/>
    <property type="match status" value="1"/>
</dbReference>
<dbReference type="PRINTS" id="PR00975">
    <property type="entry name" value="RIBOSOMALS19"/>
</dbReference>
<dbReference type="SUPFAM" id="SSF54570">
    <property type="entry name" value="Ribosomal protein S19"/>
    <property type="match status" value="1"/>
</dbReference>
<dbReference type="PROSITE" id="PS00323">
    <property type="entry name" value="RIBOSOMAL_S19"/>
    <property type="match status" value="1"/>
</dbReference>
<evidence type="ECO:0000255" key="1">
    <source>
        <dbReference type="HAMAP-Rule" id="MF_00531"/>
    </source>
</evidence>
<evidence type="ECO:0000305" key="2"/>
<gene>
    <name evidence="1" type="primary">rps19</name>
</gene>
<comment type="function">
    <text evidence="1">Protein S19 forms a complex with S13 that binds strongly to the 16S ribosomal RNA.</text>
</comment>
<comment type="subcellular location">
    <subcellularLocation>
        <location>Plastid</location>
        <location>Chloroplast</location>
    </subcellularLocation>
</comment>
<comment type="similarity">
    <text evidence="1">Belongs to the universal ribosomal protein uS19 family.</text>
</comment>
<accession>Q2MI60</accession>
<sequence>MTRSLKKNPFVANHLLKKIDKLNTKAEKEIIVTWSRASTIIPTMIGHTIAIHNGKEHLPIYITDSMVGHKLGEFAPTLNFRGHAKSDNRSRR</sequence>
<protein>
    <recommendedName>
        <fullName evidence="1">Small ribosomal subunit protein uS19c</fullName>
    </recommendedName>
    <alternativeName>
        <fullName evidence="2">30S ribosomal protein S19, chloroplastic</fullName>
    </alternativeName>
</protein>
<reference key="1">
    <citation type="journal article" date="2006" name="Theor. Appl. Genet.">
        <title>Complete chloroplast genome sequences of Solanum bulbocastanum, Solanum lycopersicum and comparative analyses with other Solanaceae genomes.</title>
        <authorList>
            <person name="Daniell H."/>
            <person name="Lee S.-B."/>
            <person name="Grevich J."/>
            <person name="Saski C."/>
            <person name="Quesada-Vargas T."/>
            <person name="Guda C."/>
            <person name="Tomkins J."/>
            <person name="Jansen R.K."/>
        </authorList>
    </citation>
    <scope>NUCLEOTIDE SEQUENCE [LARGE SCALE GENOMIC DNA]</scope>
    <source>
        <strain>cv. LA3023</strain>
    </source>
</reference>
<reference key="2">
    <citation type="journal article" date="2006" name="J. Mol. Evol.">
        <title>Sequence of the tomato chloroplast DNA and evolutionary comparison of solanaceous plastid genomes.</title>
        <authorList>
            <person name="Kahlau S."/>
            <person name="Aspinall S."/>
            <person name="Gray J.C."/>
            <person name="Bock R."/>
        </authorList>
    </citation>
    <scope>NUCLEOTIDE SEQUENCE [LARGE SCALE GENOMIC DNA]</scope>
    <source>
        <strain>cv. IPA-6</strain>
    </source>
</reference>
<feature type="chain" id="PRO_0000276924" description="Small ribosomal subunit protein uS19c">
    <location>
        <begin position="1"/>
        <end position="92"/>
    </location>
</feature>
<geneLocation type="chloroplast"/>
<organism>
    <name type="scientific">Solanum lycopersicum</name>
    <name type="common">Tomato</name>
    <name type="synonym">Lycopersicon esculentum</name>
    <dbReference type="NCBI Taxonomy" id="4081"/>
    <lineage>
        <taxon>Eukaryota</taxon>
        <taxon>Viridiplantae</taxon>
        <taxon>Streptophyta</taxon>
        <taxon>Embryophyta</taxon>
        <taxon>Tracheophyta</taxon>
        <taxon>Spermatophyta</taxon>
        <taxon>Magnoliopsida</taxon>
        <taxon>eudicotyledons</taxon>
        <taxon>Gunneridae</taxon>
        <taxon>Pentapetalae</taxon>
        <taxon>asterids</taxon>
        <taxon>lamiids</taxon>
        <taxon>Solanales</taxon>
        <taxon>Solanaceae</taxon>
        <taxon>Solanoideae</taxon>
        <taxon>Solaneae</taxon>
        <taxon>Solanum</taxon>
        <taxon>Solanum subgen. Lycopersicon</taxon>
    </lineage>
</organism>
<proteinExistence type="inferred from homology"/>
<name>RR19_SOLLC</name>
<keyword id="KW-0150">Chloroplast</keyword>
<keyword id="KW-0934">Plastid</keyword>
<keyword id="KW-1185">Reference proteome</keyword>
<keyword id="KW-0687">Ribonucleoprotein</keyword>
<keyword id="KW-0689">Ribosomal protein</keyword>
<keyword id="KW-0694">RNA-binding</keyword>
<keyword id="KW-0699">rRNA-binding</keyword>